<keyword id="KW-0028">Amino-acid biosynthesis</keyword>
<keyword id="KW-0067">ATP-binding</keyword>
<keyword id="KW-0963">Cytoplasm</keyword>
<keyword id="KW-0418">Kinase</keyword>
<keyword id="KW-0547">Nucleotide-binding</keyword>
<keyword id="KW-0641">Proline biosynthesis</keyword>
<keyword id="KW-1185">Reference proteome</keyword>
<keyword id="KW-0808">Transferase</keyword>
<evidence type="ECO:0000255" key="1">
    <source>
        <dbReference type="HAMAP-Rule" id="MF_00456"/>
    </source>
</evidence>
<protein>
    <recommendedName>
        <fullName evidence="1">Glutamate 5-kinase</fullName>
        <ecNumber evidence="1">2.7.2.11</ecNumber>
    </recommendedName>
    <alternativeName>
        <fullName evidence="1">Gamma-glutamyl kinase</fullName>
        <shortName evidence="1">GK</shortName>
    </alternativeName>
</protein>
<gene>
    <name evidence="1" type="primary">proB</name>
    <name type="ordered locus">PD_0296</name>
</gene>
<name>PROB_XYLFT</name>
<sequence>MTGIPPPSRFPEQPIPPWRRAVLKVGSSLLAADGGGLSPRFALDLAHFVSANITAGRQLVIVSSGAVAAGRALIPPLPESGGALAARQALAALGQAQLIALWQRFFDRPVAQVLLTHDDLRNRRRYLNARATLRELLHLGTLPVVNENDTVSVDELKLGDNDNLAAIVAALIDAQALFIATDIDGLYTTDPRHHSDAQPLHEVRTLTPENLAMAGDSSSTVGTGGMRTKLEAALKAGAAGIDTYLFNGRSSDVVRGLAQHRLRGTRIHPTCTPIAARKYWLRHAPVEPGAILIDAGAAAALAQQGASLLPGGVLSAEGDFRRGDMIQIATRSPDHPSHPLARGLVQYSAADVRRIAGCHSRDIQTLLGYTYGDTIVHRDDLVLL</sequence>
<accession>Q87EL0</accession>
<proteinExistence type="inferred from homology"/>
<comment type="function">
    <text evidence="1">Catalyzes the transfer of a phosphate group to glutamate to form L-glutamate 5-phosphate.</text>
</comment>
<comment type="catalytic activity">
    <reaction evidence="1">
        <text>L-glutamate + ATP = L-glutamyl 5-phosphate + ADP</text>
        <dbReference type="Rhea" id="RHEA:14877"/>
        <dbReference type="ChEBI" id="CHEBI:29985"/>
        <dbReference type="ChEBI" id="CHEBI:30616"/>
        <dbReference type="ChEBI" id="CHEBI:58274"/>
        <dbReference type="ChEBI" id="CHEBI:456216"/>
        <dbReference type="EC" id="2.7.2.11"/>
    </reaction>
</comment>
<comment type="pathway">
    <text evidence="1">Amino-acid biosynthesis; L-proline biosynthesis; L-glutamate 5-semialdehyde from L-glutamate: step 1/2.</text>
</comment>
<comment type="subcellular location">
    <subcellularLocation>
        <location evidence="1">Cytoplasm</location>
    </subcellularLocation>
</comment>
<comment type="similarity">
    <text evidence="1">Belongs to the glutamate 5-kinase family.</text>
</comment>
<dbReference type="EC" id="2.7.2.11" evidence="1"/>
<dbReference type="EMBL" id="AE009442">
    <property type="protein sequence ID" value="AAO28181.1"/>
    <property type="molecule type" value="Genomic_DNA"/>
</dbReference>
<dbReference type="RefSeq" id="WP_011097579.1">
    <property type="nucleotide sequence ID" value="NC_004556.1"/>
</dbReference>
<dbReference type="SMR" id="Q87EL0"/>
<dbReference type="GeneID" id="93903998"/>
<dbReference type="KEGG" id="xft:PD_0296"/>
<dbReference type="HOGENOM" id="CLU_025400_2_0_6"/>
<dbReference type="UniPathway" id="UPA00098">
    <property type="reaction ID" value="UER00359"/>
</dbReference>
<dbReference type="Proteomes" id="UP000002516">
    <property type="component" value="Chromosome"/>
</dbReference>
<dbReference type="GO" id="GO:0005829">
    <property type="term" value="C:cytosol"/>
    <property type="evidence" value="ECO:0007669"/>
    <property type="project" value="TreeGrafter"/>
</dbReference>
<dbReference type="GO" id="GO:0005524">
    <property type="term" value="F:ATP binding"/>
    <property type="evidence" value="ECO:0007669"/>
    <property type="project" value="UniProtKB-KW"/>
</dbReference>
<dbReference type="GO" id="GO:0004349">
    <property type="term" value="F:glutamate 5-kinase activity"/>
    <property type="evidence" value="ECO:0007669"/>
    <property type="project" value="UniProtKB-UniRule"/>
</dbReference>
<dbReference type="GO" id="GO:0003723">
    <property type="term" value="F:RNA binding"/>
    <property type="evidence" value="ECO:0007669"/>
    <property type="project" value="InterPro"/>
</dbReference>
<dbReference type="GO" id="GO:0055129">
    <property type="term" value="P:L-proline biosynthetic process"/>
    <property type="evidence" value="ECO:0007669"/>
    <property type="project" value="UniProtKB-UniRule"/>
</dbReference>
<dbReference type="CDD" id="cd04242">
    <property type="entry name" value="AAK_G5K_ProB"/>
    <property type="match status" value="1"/>
</dbReference>
<dbReference type="CDD" id="cd21157">
    <property type="entry name" value="PUA_G5K"/>
    <property type="match status" value="1"/>
</dbReference>
<dbReference type="FunFam" id="2.30.130.10:FF:000007">
    <property type="entry name" value="Glutamate 5-kinase"/>
    <property type="match status" value="1"/>
</dbReference>
<dbReference type="FunFam" id="3.40.1160.10:FF:000018">
    <property type="entry name" value="Glutamate 5-kinase"/>
    <property type="match status" value="1"/>
</dbReference>
<dbReference type="Gene3D" id="3.40.1160.10">
    <property type="entry name" value="Acetylglutamate kinase-like"/>
    <property type="match status" value="1"/>
</dbReference>
<dbReference type="Gene3D" id="2.30.130.10">
    <property type="entry name" value="PUA domain"/>
    <property type="match status" value="1"/>
</dbReference>
<dbReference type="HAMAP" id="MF_00456">
    <property type="entry name" value="ProB"/>
    <property type="match status" value="1"/>
</dbReference>
<dbReference type="InterPro" id="IPR036393">
    <property type="entry name" value="AceGlu_kinase-like_sf"/>
</dbReference>
<dbReference type="InterPro" id="IPR001048">
    <property type="entry name" value="Asp/Glu/Uridylate_kinase"/>
</dbReference>
<dbReference type="InterPro" id="IPR041739">
    <property type="entry name" value="G5K_ProB"/>
</dbReference>
<dbReference type="InterPro" id="IPR001057">
    <property type="entry name" value="Glu/AcGlu_kinase"/>
</dbReference>
<dbReference type="InterPro" id="IPR011529">
    <property type="entry name" value="Glu_5kinase"/>
</dbReference>
<dbReference type="InterPro" id="IPR005715">
    <property type="entry name" value="Glu_5kinase/COase_Synthase"/>
</dbReference>
<dbReference type="InterPro" id="IPR019797">
    <property type="entry name" value="Glutamate_5-kinase_CS"/>
</dbReference>
<dbReference type="InterPro" id="IPR002478">
    <property type="entry name" value="PUA"/>
</dbReference>
<dbReference type="InterPro" id="IPR015947">
    <property type="entry name" value="PUA-like_sf"/>
</dbReference>
<dbReference type="InterPro" id="IPR036974">
    <property type="entry name" value="PUA_sf"/>
</dbReference>
<dbReference type="NCBIfam" id="TIGR01027">
    <property type="entry name" value="proB"/>
    <property type="match status" value="1"/>
</dbReference>
<dbReference type="PANTHER" id="PTHR43654">
    <property type="entry name" value="GLUTAMATE 5-KINASE"/>
    <property type="match status" value="1"/>
</dbReference>
<dbReference type="PANTHER" id="PTHR43654:SF1">
    <property type="entry name" value="ISOPENTENYL PHOSPHATE KINASE"/>
    <property type="match status" value="1"/>
</dbReference>
<dbReference type="Pfam" id="PF00696">
    <property type="entry name" value="AA_kinase"/>
    <property type="match status" value="1"/>
</dbReference>
<dbReference type="Pfam" id="PF01472">
    <property type="entry name" value="PUA"/>
    <property type="match status" value="1"/>
</dbReference>
<dbReference type="PIRSF" id="PIRSF000729">
    <property type="entry name" value="GK"/>
    <property type="match status" value="1"/>
</dbReference>
<dbReference type="PRINTS" id="PR00474">
    <property type="entry name" value="GLU5KINASE"/>
</dbReference>
<dbReference type="SMART" id="SM00359">
    <property type="entry name" value="PUA"/>
    <property type="match status" value="1"/>
</dbReference>
<dbReference type="SUPFAM" id="SSF53633">
    <property type="entry name" value="Carbamate kinase-like"/>
    <property type="match status" value="1"/>
</dbReference>
<dbReference type="SUPFAM" id="SSF88697">
    <property type="entry name" value="PUA domain-like"/>
    <property type="match status" value="1"/>
</dbReference>
<dbReference type="PROSITE" id="PS00902">
    <property type="entry name" value="GLUTAMATE_5_KINASE"/>
    <property type="match status" value="1"/>
</dbReference>
<dbReference type="PROSITE" id="PS50890">
    <property type="entry name" value="PUA"/>
    <property type="match status" value="1"/>
</dbReference>
<reference key="1">
    <citation type="journal article" date="2003" name="J. Bacteriol.">
        <title>Comparative analyses of the complete genome sequences of Pierce's disease and citrus variegated chlorosis strains of Xylella fastidiosa.</title>
        <authorList>
            <person name="Van Sluys M.A."/>
            <person name="de Oliveira M.C."/>
            <person name="Monteiro-Vitorello C.B."/>
            <person name="Miyaki C.Y."/>
            <person name="Furlan L.R."/>
            <person name="Camargo L.E.A."/>
            <person name="da Silva A.C.R."/>
            <person name="Moon D.H."/>
            <person name="Takita M.A."/>
            <person name="Lemos E.G.M."/>
            <person name="Machado M.A."/>
            <person name="Ferro M.I.T."/>
            <person name="da Silva F.R."/>
            <person name="Goldman M.H.S."/>
            <person name="Goldman G.H."/>
            <person name="Lemos M.V.F."/>
            <person name="El-Dorry H."/>
            <person name="Tsai S.M."/>
            <person name="Carrer H."/>
            <person name="Carraro D.M."/>
            <person name="de Oliveira R.C."/>
            <person name="Nunes L.R."/>
            <person name="Siqueira W.J."/>
            <person name="Coutinho L.L."/>
            <person name="Kimura E.T."/>
            <person name="Ferro E.S."/>
            <person name="Harakava R."/>
            <person name="Kuramae E.E."/>
            <person name="Marino C.L."/>
            <person name="Giglioti E."/>
            <person name="Abreu I.L."/>
            <person name="Alves L.M.C."/>
            <person name="do Amaral A.M."/>
            <person name="Baia G.S."/>
            <person name="Blanco S.R."/>
            <person name="Brito M.S."/>
            <person name="Cannavan F.S."/>
            <person name="Celestino A.V."/>
            <person name="da Cunha A.F."/>
            <person name="Fenille R.C."/>
            <person name="Ferro J.A."/>
            <person name="Formighieri E.F."/>
            <person name="Kishi L.T."/>
            <person name="Leoni S.G."/>
            <person name="Oliveira A.R."/>
            <person name="Rosa V.E. Jr."/>
            <person name="Sassaki F.T."/>
            <person name="Sena J.A.D."/>
            <person name="de Souza A.A."/>
            <person name="Truffi D."/>
            <person name="Tsukumo F."/>
            <person name="Yanai G.M."/>
            <person name="Zaros L.G."/>
            <person name="Civerolo E.L."/>
            <person name="Simpson A.J.G."/>
            <person name="Almeida N.F. Jr."/>
            <person name="Setubal J.C."/>
            <person name="Kitajima J.P."/>
        </authorList>
    </citation>
    <scope>NUCLEOTIDE SEQUENCE [LARGE SCALE GENOMIC DNA]</scope>
    <source>
        <strain>Temecula1 / ATCC 700964</strain>
    </source>
</reference>
<organism>
    <name type="scientific">Xylella fastidiosa (strain Temecula1 / ATCC 700964)</name>
    <dbReference type="NCBI Taxonomy" id="183190"/>
    <lineage>
        <taxon>Bacteria</taxon>
        <taxon>Pseudomonadati</taxon>
        <taxon>Pseudomonadota</taxon>
        <taxon>Gammaproteobacteria</taxon>
        <taxon>Lysobacterales</taxon>
        <taxon>Lysobacteraceae</taxon>
        <taxon>Xylella</taxon>
    </lineage>
</organism>
<feature type="chain" id="PRO_0000109761" description="Glutamate 5-kinase">
    <location>
        <begin position="1"/>
        <end position="384"/>
    </location>
</feature>
<feature type="domain" description="PUA" evidence="1">
    <location>
        <begin position="288"/>
        <end position="370"/>
    </location>
</feature>
<feature type="binding site" evidence="1">
    <location>
        <position position="24"/>
    </location>
    <ligand>
        <name>ATP</name>
        <dbReference type="ChEBI" id="CHEBI:30616"/>
    </ligand>
</feature>
<feature type="binding site" evidence="1">
    <location>
        <position position="64"/>
    </location>
    <ligand>
        <name>substrate</name>
    </ligand>
</feature>
<feature type="binding site" evidence="1">
    <location>
        <position position="149"/>
    </location>
    <ligand>
        <name>substrate</name>
    </ligand>
</feature>
<feature type="binding site" evidence="1">
    <location>
        <position position="161"/>
    </location>
    <ligand>
        <name>substrate</name>
    </ligand>
</feature>
<feature type="binding site" evidence="1">
    <location>
        <begin position="181"/>
        <end position="182"/>
    </location>
    <ligand>
        <name>ATP</name>
        <dbReference type="ChEBI" id="CHEBI:30616"/>
    </ligand>
</feature>
<feature type="binding site" evidence="1">
    <location>
        <begin position="223"/>
        <end position="229"/>
    </location>
    <ligand>
        <name>ATP</name>
        <dbReference type="ChEBI" id="CHEBI:30616"/>
    </ligand>
</feature>